<proteinExistence type="inferred from homology"/>
<comment type="function">
    <text evidence="2">ATP-dependent metalloprotease that catalyzes the degradation of folded and unfolded proteins with a suitable degron sequence in the mitochondrial intermembrane region (By similarity). Plays an important role in regulating mitochondrial morphology and function (By similarity).</text>
</comment>
<comment type="cofactor">
    <cofactor evidence="2">
        <name>Zn(2+)</name>
        <dbReference type="ChEBI" id="CHEBI:29105"/>
    </cofactor>
    <text evidence="2">Binds 1 zinc ion per subunit.</text>
</comment>
<comment type="subcellular location">
    <subcellularLocation>
        <location evidence="2">Mitochondrion inner membrane</location>
    </subcellularLocation>
    <subcellularLocation>
        <location evidence="2">Mitochondrion</location>
    </subcellularLocation>
</comment>
<comment type="similarity">
    <text evidence="4">In the N-terminal section; belongs to the AAA ATPase family.</text>
</comment>
<comment type="similarity">
    <text evidence="4">In the C-terminal section; belongs to the peptidase M41 family.</text>
</comment>
<evidence type="ECO:0000250" key="1">
    <source>
        <dbReference type="UniProtKB" id="P0AAI3"/>
    </source>
</evidence>
<evidence type="ECO:0000250" key="2">
    <source>
        <dbReference type="UniProtKB" id="Q96TA2"/>
    </source>
</evidence>
<evidence type="ECO:0000255" key="3"/>
<evidence type="ECO:0000305" key="4"/>
<feature type="chain" id="PRO_0000084665" description="ATP-dependent zinc metalloprotease YME1 homolog">
    <location>
        <begin position="1"/>
        <end position="723"/>
    </location>
</feature>
<feature type="transmembrane region" description="Helical" evidence="3">
    <location>
        <begin position="198"/>
        <end position="220"/>
    </location>
</feature>
<feature type="active site" evidence="1">
    <location>
        <position position="510"/>
    </location>
</feature>
<feature type="binding site" evidence="3">
    <location>
        <begin position="288"/>
        <end position="295"/>
    </location>
    <ligand>
        <name>ATP</name>
        <dbReference type="ChEBI" id="CHEBI:30616"/>
    </ligand>
</feature>
<feature type="binding site" evidence="1">
    <location>
        <position position="509"/>
    </location>
    <ligand>
        <name>Zn(2+)</name>
        <dbReference type="ChEBI" id="CHEBI:29105"/>
        <note>catalytic</note>
    </ligand>
</feature>
<feature type="binding site" evidence="1">
    <location>
        <position position="513"/>
    </location>
    <ligand>
        <name>Zn(2+)</name>
        <dbReference type="ChEBI" id="CHEBI:29105"/>
        <note>catalytic</note>
    </ligand>
</feature>
<feature type="binding site" evidence="1">
    <location>
        <position position="587"/>
    </location>
    <ligand>
        <name>Zn(2+)</name>
        <dbReference type="ChEBI" id="CHEBI:29105"/>
        <note>catalytic</note>
    </ligand>
</feature>
<gene>
    <name type="primary">ymel-1</name>
    <name type="ORF">M03C11.5</name>
</gene>
<reference key="1">
    <citation type="journal article" date="1998" name="Science">
        <title>Genome sequence of the nematode C. elegans: a platform for investigating biology.</title>
        <authorList>
            <consortium name="The C. elegans sequencing consortium"/>
        </authorList>
    </citation>
    <scope>NUCLEOTIDE SEQUENCE [LARGE SCALE GENOMIC DNA]</scope>
    <source>
        <strain>Bristol N2</strain>
    </source>
</reference>
<accession>P54813</accession>
<protein>
    <recommendedName>
        <fullName>ATP-dependent zinc metalloprotease YME1 homolog</fullName>
        <ecNumber evidence="2">3.4.24.-</ecNumber>
    </recommendedName>
</protein>
<organism>
    <name type="scientific">Caenorhabditis elegans</name>
    <dbReference type="NCBI Taxonomy" id="6239"/>
    <lineage>
        <taxon>Eukaryota</taxon>
        <taxon>Metazoa</taxon>
        <taxon>Ecdysozoa</taxon>
        <taxon>Nematoda</taxon>
        <taxon>Chromadorea</taxon>
        <taxon>Rhabditida</taxon>
        <taxon>Rhabditina</taxon>
        <taxon>Rhabditomorpha</taxon>
        <taxon>Rhabditoidea</taxon>
        <taxon>Rhabditidae</taxon>
        <taxon>Peloderinae</taxon>
        <taxon>Caenorhabditis</taxon>
    </lineage>
</organism>
<dbReference type="EC" id="3.4.24.-" evidence="2"/>
<dbReference type="EMBL" id="Z49128">
    <property type="protein sequence ID" value="CAA88955.2"/>
    <property type="molecule type" value="Genomic_DNA"/>
</dbReference>
<dbReference type="PIR" id="T23690">
    <property type="entry name" value="T23690"/>
</dbReference>
<dbReference type="RefSeq" id="NP_001366715.1">
    <property type="nucleotide sequence ID" value="NM_001379892.2"/>
</dbReference>
<dbReference type="RefSeq" id="NP_499298.2">
    <property type="nucleotide sequence ID" value="NM_066897.3"/>
</dbReference>
<dbReference type="SMR" id="P54813"/>
<dbReference type="BioGRID" id="41652">
    <property type="interactions" value="7"/>
</dbReference>
<dbReference type="FunCoup" id="P54813">
    <property type="interactions" value="3513"/>
</dbReference>
<dbReference type="STRING" id="6239.M03C11.5.2"/>
<dbReference type="MEROPS" id="M41.A11"/>
<dbReference type="TCDB" id="3.A.29.1.2">
    <property type="family name" value="the mitochondrial inner membrane i-aaa protease complex (mimp) family"/>
</dbReference>
<dbReference type="PaxDb" id="6239-M03C11.5.2"/>
<dbReference type="PeptideAtlas" id="P54813"/>
<dbReference type="EnsemblMetazoa" id="M03C11.5.1">
    <property type="protein sequence ID" value="M03C11.5.1"/>
    <property type="gene ID" value="WBGene00010842"/>
</dbReference>
<dbReference type="GeneID" id="176460"/>
<dbReference type="UCSC" id="M03C11.5.1">
    <property type="organism name" value="c. elegans"/>
</dbReference>
<dbReference type="AGR" id="WB:WBGene00010842"/>
<dbReference type="WormBase" id="M03C11.5">
    <property type="protein sequence ID" value="CE43540"/>
    <property type="gene ID" value="WBGene00010842"/>
    <property type="gene designation" value="ymel-1"/>
</dbReference>
<dbReference type="eggNOG" id="KOG0734">
    <property type="taxonomic scope" value="Eukaryota"/>
</dbReference>
<dbReference type="GeneTree" id="ENSGT00550000074836"/>
<dbReference type="HOGENOM" id="CLU_000688_19_2_1"/>
<dbReference type="InParanoid" id="P54813"/>
<dbReference type="OMA" id="WNQYESD"/>
<dbReference type="OrthoDB" id="1413014at2759"/>
<dbReference type="PhylomeDB" id="P54813"/>
<dbReference type="Reactome" id="R-CEL-8949664">
    <property type="pathway name" value="Processing of SMDT1"/>
</dbReference>
<dbReference type="Reactome" id="R-CEL-9837999">
    <property type="pathway name" value="Mitochondrial protein degradation"/>
</dbReference>
<dbReference type="PRO" id="PR:P54813"/>
<dbReference type="Proteomes" id="UP000001940">
    <property type="component" value="Chromosome III"/>
</dbReference>
<dbReference type="Bgee" id="WBGene00010842">
    <property type="expression patterns" value="Expressed in adult organism and 4 other cell types or tissues"/>
</dbReference>
<dbReference type="GO" id="GO:0005745">
    <property type="term" value="C:m-AAA complex"/>
    <property type="evidence" value="ECO:0000318"/>
    <property type="project" value="GO_Central"/>
</dbReference>
<dbReference type="GO" id="GO:0005524">
    <property type="term" value="F:ATP binding"/>
    <property type="evidence" value="ECO:0007669"/>
    <property type="project" value="UniProtKB-KW"/>
</dbReference>
<dbReference type="GO" id="GO:0016887">
    <property type="term" value="F:ATP hydrolysis activity"/>
    <property type="evidence" value="ECO:0007669"/>
    <property type="project" value="InterPro"/>
</dbReference>
<dbReference type="GO" id="GO:0004176">
    <property type="term" value="F:ATP-dependent peptidase activity"/>
    <property type="evidence" value="ECO:0007669"/>
    <property type="project" value="InterPro"/>
</dbReference>
<dbReference type="GO" id="GO:0046872">
    <property type="term" value="F:metal ion binding"/>
    <property type="evidence" value="ECO:0007669"/>
    <property type="project" value="UniProtKB-KW"/>
</dbReference>
<dbReference type="GO" id="GO:0004222">
    <property type="term" value="F:metalloendopeptidase activity"/>
    <property type="evidence" value="ECO:0000318"/>
    <property type="project" value="GO_Central"/>
</dbReference>
<dbReference type="GO" id="GO:0034982">
    <property type="term" value="P:mitochondrial protein processing"/>
    <property type="evidence" value="ECO:0000318"/>
    <property type="project" value="GO_Central"/>
</dbReference>
<dbReference type="CDD" id="cd19501">
    <property type="entry name" value="RecA-like_FtsH"/>
    <property type="match status" value="1"/>
</dbReference>
<dbReference type="FunFam" id="1.10.8.60:FF:000001">
    <property type="entry name" value="ATP-dependent zinc metalloprotease FtsH"/>
    <property type="match status" value="1"/>
</dbReference>
<dbReference type="FunFam" id="1.20.58.760:FF:000002">
    <property type="entry name" value="ATP-dependent zinc metalloprotease FtsH"/>
    <property type="match status" value="1"/>
</dbReference>
<dbReference type="FunFam" id="3.40.50.300:FF:000175">
    <property type="entry name" value="ATP-dependent zinc metalloprotease FTSH 4"/>
    <property type="match status" value="1"/>
</dbReference>
<dbReference type="Gene3D" id="1.10.8.60">
    <property type="match status" value="1"/>
</dbReference>
<dbReference type="Gene3D" id="3.40.50.300">
    <property type="entry name" value="P-loop containing nucleotide triphosphate hydrolases"/>
    <property type="match status" value="1"/>
</dbReference>
<dbReference type="Gene3D" id="1.20.58.760">
    <property type="entry name" value="Peptidase M41"/>
    <property type="match status" value="1"/>
</dbReference>
<dbReference type="HAMAP" id="MF_01458">
    <property type="entry name" value="FtsH"/>
    <property type="match status" value="1"/>
</dbReference>
<dbReference type="InterPro" id="IPR003593">
    <property type="entry name" value="AAA+_ATPase"/>
</dbReference>
<dbReference type="InterPro" id="IPR041569">
    <property type="entry name" value="AAA_lid_3"/>
</dbReference>
<dbReference type="InterPro" id="IPR003959">
    <property type="entry name" value="ATPase_AAA_core"/>
</dbReference>
<dbReference type="InterPro" id="IPR003960">
    <property type="entry name" value="ATPase_AAA_CS"/>
</dbReference>
<dbReference type="InterPro" id="IPR005936">
    <property type="entry name" value="FtsH"/>
</dbReference>
<dbReference type="InterPro" id="IPR027417">
    <property type="entry name" value="P-loop_NTPase"/>
</dbReference>
<dbReference type="InterPro" id="IPR000642">
    <property type="entry name" value="Peptidase_M41"/>
</dbReference>
<dbReference type="InterPro" id="IPR037219">
    <property type="entry name" value="Peptidase_M41-like"/>
</dbReference>
<dbReference type="NCBIfam" id="TIGR01241">
    <property type="entry name" value="FtsH_fam"/>
    <property type="match status" value="1"/>
</dbReference>
<dbReference type="PANTHER" id="PTHR23076:SF97">
    <property type="entry name" value="ATP-DEPENDENT ZINC METALLOPROTEASE YME1L1"/>
    <property type="match status" value="1"/>
</dbReference>
<dbReference type="PANTHER" id="PTHR23076">
    <property type="entry name" value="METALLOPROTEASE M41 FTSH"/>
    <property type="match status" value="1"/>
</dbReference>
<dbReference type="Pfam" id="PF00004">
    <property type="entry name" value="AAA"/>
    <property type="match status" value="1"/>
</dbReference>
<dbReference type="Pfam" id="PF17862">
    <property type="entry name" value="AAA_lid_3"/>
    <property type="match status" value="1"/>
</dbReference>
<dbReference type="Pfam" id="PF01434">
    <property type="entry name" value="Peptidase_M41"/>
    <property type="match status" value="1"/>
</dbReference>
<dbReference type="SMART" id="SM00382">
    <property type="entry name" value="AAA"/>
    <property type="match status" value="1"/>
</dbReference>
<dbReference type="SUPFAM" id="SSF140990">
    <property type="entry name" value="FtsH protease domain-like"/>
    <property type="match status" value="1"/>
</dbReference>
<dbReference type="SUPFAM" id="SSF52540">
    <property type="entry name" value="P-loop containing nucleoside triphosphate hydrolases"/>
    <property type="match status" value="1"/>
</dbReference>
<dbReference type="PROSITE" id="PS00674">
    <property type="entry name" value="AAA"/>
    <property type="match status" value="1"/>
</dbReference>
<name>YME1_CAEEL</name>
<keyword id="KW-0067">ATP-binding</keyword>
<keyword id="KW-0378">Hydrolase</keyword>
<keyword id="KW-0472">Membrane</keyword>
<keyword id="KW-0479">Metal-binding</keyword>
<keyword id="KW-0482">Metalloprotease</keyword>
<keyword id="KW-0496">Mitochondrion</keyword>
<keyword id="KW-0999">Mitochondrion inner membrane</keyword>
<keyword id="KW-0547">Nucleotide-binding</keyword>
<keyword id="KW-0645">Protease</keyword>
<keyword id="KW-1185">Reference proteome</keyword>
<keyword id="KW-0812">Transmembrane</keyword>
<keyword id="KW-1133">Transmembrane helix</keyword>
<keyword id="KW-0862">Zinc</keyword>
<sequence length="723" mass="79831">MQSAINLNIGGLLQNTGLLRNSRNGINRKPLDIEATAASLSRVYHQVWRQFSSDTSSPVTINQMNNILRDSTLSRRIARKSEISLNYDDAVVRIIPASSSFYIQRRGFRTRKQTFGVGNAGKPTQDEVKSPLTYFSELLAGKKQKTSEGGVEKWNQYESDLKKLPENQQRTYTDGFVKGLLSNGVSGAGKDGKKSNTLTRFYIFLVFCIFFGYLTGRIRVRVGDRQIGSLFFSNPQEVNPEDVQVTFDDVRGMDEAKLEVEEIVDYLKDPEKYSRLGGRLPKGVLLVGPPGTGKTLLARAIAGEAQVPFFHTAGSEFDEVLVGQGARRVRDLFDKAKARAPCIIFIDEIDSVGSKRVSNSIHPYANQTINQLLSEMDGFTRNEGIIVIAATNRVDDLDKALLRPGRFDVRVTVPKPDLAGRVDIFNFYLSKIVHSGGIDPKVLAKGSTGFTGADIENMVNQAALKAATDNAVEVTMAYLDEARDRVLMGPARTGGRIPDEEANRNTAYHEAGHTLVSLYTKDATPLHKVTIIPRGQSLGHTAMLPEKDSYQLTKAQMLATLDVMMGGRVAEELIFGDDKVTTGAADDLSKATQLAVQMVKVFGMSDKVGLRDFTAQDNESALVKVSDLAPQTAELIDAEINRVLQESYKRAKVILETKKKEHQLLAEALLEYETLSADEVKRVISGQKIKRPTPAAVKKSNETKRNQPSLVLHLFEEEGRGKQ</sequence>